<proteinExistence type="inferred from homology"/>
<organism>
    <name type="scientific">Clostridium perfringens (strain 13 / Type A)</name>
    <dbReference type="NCBI Taxonomy" id="195102"/>
    <lineage>
        <taxon>Bacteria</taxon>
        <taxon>Bacillati</taxon>
        <taxon>Bacillota</taxon>
        <taxon>Clostridia</taxon>
        <taxon>Eubacteriales</taxon>
        <taxon>Clostridiaceae</taxon>
        <taxon>Clostridium</taxon>
    </lineage>
</organism>
<dbReference type="EMBL" id="BA000016">
    <property type="protein sequence ID" value="BAB82110.1"/>
    <property type="status" value="ALT_FRAME"/>
    <property type="molecule type" value="Genomic_DNA"/>
</dbReference>
<dbReference type="SMR" id="Q8XHS4"/>
<dbReference type="STRING" id="195102.gene:10491721"/>
<dbReference type="KEGG" id="cpe:CPE2404"/>
<dbReference type="HOGENOM" id="CLU_041575_5_2_9"/>
<dbReference type="Proteomes" id="UP000000818">
    <property type="component" value="Chromosome"/>
</dbReference>
<dbReference type="GO" id="GO:1990904">
    <property type="term" value="C:ribonucleoprotein complex"/>
    <property type="evidence" value="ECO:0007669"/>
    <property type="project" value="UniProtKB-KW"/>
</dbReference>
<dbReference type="GO" id="GO:0005840">
    <property type="term" value="C:ribosome"/>
    <property type="evidence" value="ECO:0007669"/>
    <property type="project" value="UniProtKB-KW"/>
</dbReference>
<dbReference type="GO" id="GO:0019843">
    <property type="term" value="F:rRNA binding"/>
    <property type="evidence" value="ECO:0007669"/>
    <property type="project" value="UniProtKB-UniRule"/>
</dbReference>
<dbReference type="GO" id="GO:0003735">
    <property type="term" value="F:structural constituent of ribosome"/>
    <property type="evidence" value="ECO:0007669"/>
    <property type="project" value="InterPro"/>
</dbReference>
<dbReference type="GO" id="GO:0006412">
    <property type="term" value="P:translation"/>
    <property type="evidence" value="ECO:0007669"/>
    <property type="project" value="UniProtKB-UniRule"/>
</dbReference>
<dbReference type="Gene3D" id="3.40.1370.10">
    <property type="match status" value="1"/>
</dbReference>
<dbReference type="HAMAP" id="MF_01328_B">
    <property type="entry name" value="Ribosomal_uL4_B"/>
    <property type="match status" value="1"/>
</dbReference>
<dbReference type="InterPro" id="IPR002136">
    <property type="entry name" value="Ribosomal_uL4"/>
</dbReference>
<dbReference type="InterPro" id="IPR013005">
    <property type="entry name" value="Ribosomal_uL4-like"/>
</dbReference>
<dbReference type="InterPro" id="IPR023574">
    <property type="entry name" value="Ribosomal_uL4_dom_sf"/>
</dbReference>
<dbReference type="NCBIfam" id="TIGR03953">
    <property type="entry name" value="rplD_bact"/>
    <property type="match status" value="1"/>
</dbReference>
<dbReference type="PANTHER" id="PTHR10746">
    <property type="entry name" value="50S RIBOSOMAL PROTEIN L4"/>
    <property type="match status" value="1"/>
</dbReference>
<dbReference type="PANTHER" id="PTHR10746:SF6">
    <property type="entry name" value="LARGE RIBOSOMAL SUBUNIT PROTEIN UL4M"/>
    <property type="match status" value="1"/>
</dbReference>
<dbReference type="Pfam" id="PF00573">
    <property type="entry name" value="Ribosomal_L4"/>
    <property type="match status" value="1"/>
</dbReference>
<dbReference type="SUPFAM" id="SSF52166">
    <property type="entry name" value="Ribosomal protein L4"/>
    <property type="match status" value="1"/>
</dbReference>
<feature type="chain" id="PRO_0000129208" description="Large ribosomal subunit protein uL4">
    <location>
        <begin position="1"/>
        <end position="204"/>
    </location>
</feature>
<feature type="region of interest" description="Disordered" evidence="2">
    <location>
        <begin position="44"/>
        <end position="76"/>
    </location>
</feature>
<name>RL4_CLOPE</name>
<reference key="1">
    <citation type="journal article" date="2002" name="Proc. Natl. Acad. Sci. U.S.A.">
        <title>Complete genome sequence of Clostridium perfringens, an anaerobic flesh-eater.</title>
        <authorList>
            <person name="Shimizu T."/>
            <person name="Ohtani K."/>
            <person name="Hirakawa H."/>
            <person name="Ohshima K."/>
            <person name="Yamashita A."/>
            <person name="Shiba T."/>
            <person name="Ogasawara N."/>
            <person name="Hattori M."/>
            <person name="Kuhara S."/>
            <person name="Hayashi H."/>
        </authorList>
    </citation>
    <scope>NUCLEOTIDE SEQUENCE [LARGE SCALE GENOMIC DNA]</scope>
    <source>
        <strain>13 / Type A</strain>
    </source>
</reference>
<protein>
    <recommendedName>
        <fullName evidence="1">Large ribosomal subunit protein uL4</fullName>
    </recommendedName>
    <alternativeName>
        <fullName evidence="3">50S ribosomal protein L4</fullName>
    </alternativeName>
</protein>
<sequence length="204" mass="22691">MPKVGLFNKEGQQVGDIQLNEQVFGVEVNKYALHQVVVAQLANKRQGTQSAKTRSEVRGGGIKPWRQKGTGRARQGSIRAPQWIKGGVVFAPKPRDYRMSIPKSMRKVAMTSALTSKVADMVVLEDLTFEAPKTKEAVKMLNAFEAKKTLIITAEVNENVYKSARNIRGVTVMPVNNINVYDLLNCKTLMITKEAVNKIEEVYA</sequence>
<keyword id="KW-1185">Reference proteome</keyword>
<keyword id="KW-0687">Ribonucleoprotein</keyword>
<keyword id="KW-0689">Ribosomal protein</keyword>
<keyword id="KW-0694">RNA-binding</keyword>
<keyword id="KW-0699">rRNA-binding</keyword>
<evidence type="ECO:0000255" key="1">
    <source>
        <dbReference type="HAMAP-Rule" id="MF_01328"/>
    </source>
</evidence>
<evidence type="ECO:0000256" key="2">
    <source>
        <dbReference type="SAM" id="MobiDB-lite"/>
    </source>
</evidence>
<evidence type="ECO:0000305" key="3"/>
<comment type="function">
    <text evidence="1">One of the primary rRNA binding proteins, this protein initially binds near the 5'-end of the 23S rRNA. It is important during the early stages of 50S assembly. It makes multiple contacts with different domains of the 23S rRNA in the assembled 50S subunit and ribosome.</text>
</comment>
<comment type="function">
    <text evidence="1">Forms part of the polypeptide exit tunnel.</text>
</comment>
<comment type="subunit">
    <text evidence="1">Part of the 50S ribosomal subunit.</text>
</comment>
<comment type="similarity">
    <text evidence="1">Belongs to the universal ribosomal protein uL4 family.</text>
</comment>
<comment type="sequence caution" evidence="3">
    <conflict type="frameshift">
        <sequence resource="EMBL-CDS" id="BAB82110"/>
    </conflict>
</comment>
<gene>
    <name evidence="1" type="primary">rplD</name>
    <name type="ordered locus">CPE2404</name>
</gene>
<accession>Q8XHS4</accession>